<accession>B7V1R2</accession>
<feature type="chain" id="PRO_1000192651" description="Ribosomal protein L11 methyltransferase">
    <location>
        <begin position="1"/>
        <end position="294"/>
    </location>
</feature>
<feature type="binding site" evidence="1">
    <location>
        <position position="144"/>
    </location>
    <ligand>
        <name>S-adenosyl-L-methionine</name>
        <dbReference type="ChEBI" id="CHEBI:59789"/>
    </ligand>
</feature>
<feature type="binding site" evidence="1">
    <location>
        <position position="165"/>
    </location>
    <ligand>
        <name>S-adenosyl-L-methionine</name>
        <dbReference type="ChEBI" id="CHEBI:59789"/>
    </ligand>
</feature>
<feature type="binding site" evidence="1">
    <location>
        <position position="187"/>
    </location>
    <ligand>
        <name>S-adenosyl-L-methionine</name>
        <dbReference type="ChEBI" id="CHEBI:59789"/>
    </ligand>
</feature>
<feature type="binding site" evidence="1">
    <location>
        <position position="229"/>
    </location>
    <ligand>
        <name>S-adenosyl-L-methionine</name>
        <dbReference type="ChEBI" id="CHEBI:59789"/>
    </ligand>
</feature>
<comment type="function">
    <text evidence="1">Methylates ribosomal protein L11.</text>
</comment>
<comment type="catalytic activity">
    <reaction evidence="1">
        <text>L-lysyl-[protein] + 3 S-adenosyl-L-methionine = N(6),N(6),N(6)-trimethyl-L-lysyl-[protein] + 3 S-adenosyl-L-homocysteine + 3 H(+)</text>
        <dbReference type="Rhea" id="RHEA:54192"/>
        <dbReference type="Rhea" id="RHEA-COMP:9752"/>
        <dbReference type="Rhea" id="RHEA-COMP:13826"/>
        <dbReference type="ChEBI" id="CHEBI:15378"/>
        <dbReference type="ChEBI" id="CHEBI:29969"/>
        <dbReference type="ChEBI" id="CHEBI:57856"/>
        <dbReference type="ChEBI" id="CHEBI:59789"/>
        <dbReference type="ChEBI" id="CHEBI:61961"/>
    </reaction>
</comment>
<comment type="subcellular location">
    <subcellularLocation>
        <location evidence="1">Cytoplasm</location>
    </subcellularLocation>
</comment>
<comment type="similarity">
    <text evidence="1">Belongs to the methyltransferase superfamily. PrmA family.</text>
</comment>
<gene>
    <name evidence="1" type="primary">prmA</name>
    <name type="ordered locus">PLES_52351</name>
</gene>
<sequence>MPWLQVRLAITPEQAETYEDALLEVGAVSVTFMDAEDQPIFEPDLGTTPLWSRTHLLALFEADTDETALLAHLALLTGGDLPEHHVEEIADQDWERSWMDNFQPMRFGRRLWIVPSWHAAPEPDAVNLLLDPGLAFGTGTHPTTALCLEWLDGQELAGRQVLDFGCGSGILAIAALLLGAERAVGTDIDPQALEASRDNASRNGIEPARFPVYLPADLPQRQADVLVANILAGPLVSLAPQLTGLVRPGGLLALSGILAEQAEEVRAAYSAHFDLDPTAEREGWIRISGRRRAD</sequence>
<reference key="1">
    <citation type="journal article" date="2009" name="Genome Res.">
        <title>Newly introduced genomic prophage islands are critical determinants of in vivo competitiveness in the Liverpool epidemic strain of Pseudomonas aeruginosa.</title>
        <authorList>
            <person name="Winstanley C."/>
            <person name="Langille M.G.I."/>
            <person name="Fothergill J.L."/>
            <person name="Kukavica-Ibrulj I."/>
            <person name="Paradis-Bleau C."/>
            <person name="Sanschagrin F."/>
            <person name="Thomson N.R."/>
            <person name="Winsor G.L."/>
            <person name="Quail M.A."/>
            <person name="Lennard N."/>
            <person name="Bignell A."/>
            <person name="Clarke L."/>
            <person name="Seeger K."/>
            <person name="Saunders D."/>
            <person name="Harris D."/>
            <person name="Parkhill J."/>
            <person name="Hancock R.E.W."/>
            <person name="Brinkman F.S.L."/>
            <person name="Levesque R.C."/>
        </authorList>
    </citation>
    <scope>NUCLEOTIDE SEQUENCE [LARGE SCALE GENOMIC DNA]</scope>
    <source>
        <strain>LESB58</strain>
    </source>
</reference>
<keyword id="KW-0963">Cytoplasm</keyword>
<keyword id="KW-0489">Methyltransferase</keyword>
<keyword id="KW-0949">S-adenosyl-L-methionine</keyword>
<keyword id="KW-0808">Transferase</keyword>
<evidence type="ECO:0000255" key="1">
    <source>
        <dbReference type="HAMAP-Rule" id="MF_00735"/>
    </source>
</evidence>
<organism>
    <name type="scientific">Pseudomonas aeruginosa (strain LESB58)</name>
    <dbReference type="NCBI Taxonomy" id="557722"/>
    <lineage>
        <taxon>Bacteria</taxon>
        <taxon>Pseudomonadati</taxon>
        <taxon>Pseudomonadota</taxon>
        <taxon>Gammaproteobacteria</taxon>
        <taxon>Pseudomonadales</taxon>
        <taxon>Pseudomonadaceae</taxon>
        <taxon>Pseudomonas</taxon>
    </lineage>
</organism>
<protein>
    <recommendedName>
        <fullName evidence="1">Ribosomal protein L11 methyltransferase</fullName>
        <shortName evidence="1">L11 Mtase</shortName>
        <ecNumber evidence="1">2.1.1.-</ecNumber>
    </recommendedName>
</protein>
<proteinExistence type="inferred from homology"/>
<name>PRMA_PSEA8</name>
<dbReference type="EC" id="2.1.1.-" evidence="1"/>
<dbReference type="EMBL" id="FM209186">
    <property type="protein sequence ID" value="CAW29989.1"/>
    <property type="molecule type" value="Genomic_DNA"/>
</dbReference>
<dbReference type="RefSeq" id="WP_003112237.1">
    <property type="nucleotide sequence ID" value="NC_011770.1"/>
</dbReference>
<dbReference type="SMR" id="B7V1R2"/>
<dbReference type="KEGG" id="pag:PLES_52351"/>
<dbReference type="HOGENOM" id="CLU_049382_4_1_6"/>
<dbReference type="GO" id="GO:0005829">
    <property type="term" value="C:cytosol"/>
    <property type="evidence" value="ECO:0007669"/>
    <property type="project" value="TreeGrafter"/>
</dbReference>
<dbReference type="GO" id="GO:0016279">
    <property type="term" value="F:protein-lysine N-methyltransferase activity"/>
    <property type="evidence" value="ECO:0007669"/>
    <property type="project" value="TreeGrafter"/>
</dbReference>
<dbReference type="GO" id="GO:0032259">
    <property type="term" value="P:methylation"/>
    <property type="evidence" value="ECO:0007669"/>
    <property type="project" value="UniProtKB-KW"/>
</dbReference>
<dbReference type="CDD" id="cd02440">
    <property type="entry name" value="AdoMet_MTases"/>
    <property type="match status" value="1"/>
</dbReference>
<dbReference type="Gene3D" id="3.40.50.150">
    <property type="entry name" value="Vaccinia Virus protein VP39"/>
    <property type="match status" value="1"/>
</dbReference>
<dbReference type="HAMAP" id="MF_00735">
    <property type="entry name" value="Methyltr_PrmA"/>
    <property type="match status" value="1"/>
</dbReference>
<dbReference type="InterPro" id="IPR050078">
    <property type="entry name" value="Ribosomal_L11_MeTrfase_PrmA"/>
</dbReference>
<dbReference type="InterPro" id="IPR004498">
    <property type="entry name" value="Ribosomal_PrmA_MeTrfase"/>
</dbReference>
<dbReference type="InterPro" id="IPR029063">
    <property type="entry name" value="SAM-dependent_MTases_sf"/>
</dbReference>
<dbReference type="NCBIfam" id="TIGR00406">
    <property type="entry name" value="prmA"/>
    <property type="match status" value="1"/>
</dbReference>
<dbReference type="PANTHER" id="PTHR43648">
    <property type="entry name" value="ELECTRON TRANSFER FLAVOPROTEIN BETA SUBUNIT LYSINE METHYLTRANSFERASE"/>
    <property type="match status" value="1"/>
</dbReference>
<dbReference type="PANTHER" id="PTHR43648:SF1">
    <property type="entry name" value="ELECTRON TRANSFER FLAVOPROTEIN BETA SUBUNIT LYSINE METHYLTRANSFERASE"/>
    <property type="match status" value="1"/>
</dbReference>
<dbReference type="Pfam" id="PF06325">
    <property type="entry name" value="PrmA"/>
    <property type="match status" value="1"/>
</dbReference>
<dbReference type="PIRSF" id="PIRSF000401">
    <property type="entry name" value="RPL11_MTase"/>
    <property type="match status" value="1"/>
</dbReference>
<dbReference type="SUPFAM" id="SSF53335">
    <property type="entry name" value="S-adenosyl-L-methionine-dependent methyltransferases"/>
    <property type="match status" value="1"/>
</dbReference>